<reference key="1">
    <citation type="journal article" date="2004" name="Proc. Natl. Acad. Sci. U.S.A.">
        <title>Insights into the evolution of Yersinia pestis through whole-genome comparison with Yersinia pseudotuberculosis.</title>
        <authorList>
            <person name="Chain P.S.G."/>
            <person name="Carniel E."/>
            <person name="Larimer F.W."/>
            <person name="Lamerdin J."/>
            <person name="Stoutland P.O."/>
            <person name="Regala W.M."/>
            <person name="Georgescu A.M."/>
            <person name="Vergez L.M."/>
            <person name="Land M.L."/>
            <person name="Motin V.L."/>
            <person name="Brubaker R.R."/>
            <person name="Fowler J."/>
            <person name="Hinnebusch J."/>
            <person name="Marceau M."/>
            <person name="Medigue C."/>
            <person name="Simonet M."/>
            <person name="Chenal-Francisque V."/>
            <person name="Souza B."/>
            <person name="Dacheux D."/>
            <person name="Elliott J.M."/>
            <person name="Derbise A."/>
            <person name="Hauser L.J."/>
            <person name="Garcia E."/>
        </authorList>
    </citation>
    <scope>NUCLEOTIDE SEQUENCE [LARGE SCALE GENOMIC DNA]</scope>
    <source>
        <strain>IP32953</strain>
    </source>
</reference>
<protein>
    <recommendedName>
        <fullName evidence="1">Small ribosomal subunit protein uS4</fullName>
    </recommendedName>
    <alternativeName>
        <fullName evidence="2">30S ribosomal protein S4</fullName>
    </alternativeName>
</protein>
<keyword id="KW-0687">Ribonucleoprotein</keyword>
<keyword id="KW-0689">Ribosomal protein</keyword>
<keyword id="KW-0694">RNA-binding</keyword>
<keyword id="KW-0699">rRNA-binding</keyword>
<gene>
    <name evidence="1" type="primary">rpsD</name>
    <name type="ordered locus">YPTB3674</name>
</gene>
<feature type="chain" id="PRO_0000132501" description="Small ribosomal subunit protein uS4">
    <location>
        <begin position="1"/>
        <end position="206"/>
    </location>
</feature>
<feature type="domain" description="S4 RNA-binding" evidence="1">
    <location>
        <begin position="96"/>
        <end position="156"/>
    </location>
</feature>
<sequence length="206" mass="23549">MARYLGPKLKLSRREGTDLFLKSGVRAIDTKCKIEQPPGQHGARKPRLSDYGVQLREKQKVRRIYGVLERQFRNYYKEAARLKGNTGANLLQLLEGRLDNVVYRMGFGATRAESRQLVSHKAIMVNGRVVNIASYQVSPNDVVSIREKAKKQSRVKAALELAEQREKPTWLEVDAVKMEGVFKRIPERTDLSADINEHLIVELYSK</sequence>
<name>RS4_YERPS</name>
<dbReference type="EMBL" id="BX936398">
    <property type="protein sequence ID" value="CAH22912.1"/>
    <property type="molecule type" value="Genomic_DNA"/>
</dbReference>
<dbReference type="RefSeq" id="WP_002218949.1">
    <property type="nucleotide sequence ID" value="NZ_CP009712.1"/>
</dbReference>
<dbReference type="SMR" id="Q664U5"/>
<dbReference type="GeneID" id="97454255"/>
<dbReference type="KEGG" id="ypo:BZ17_2913"/>
<dbReference type="KEGG" id="yps:YPTB3674"/>
<dbReference type="PATRIC" id="fig|273123.14.peg.3054"/>
<dbReference type="Proteomes" id="UP000001011">
    <property type="component" value="Chromosome"/>
</dbReference>
<dbReference type="GO" id="GO:0015935">
    <property type="term" value="C:small ribosomal subunit"/>
    <property type="evidence" value="ECO:0007669"/>
    <property type="project" value="InterPro"/>
</dbReference>
<dbReference type="GO" id="GO:0019843">
    <property type="term" value="F:rRNA binding"/>
    <property type="evidence" value="ECO:0007669"/>
    <property type="project" value="UniProtKB-UniRule"/>
</dbReference>
<dbReference type="GO" id="GO:0003735">
    <property type="term" value="F:structural constituent of ribosome"/>
    <property type="evidence" value="ECO:0007669"/>
    <property type="project" value="InterPro"/>
</dbReference>
<dbReference type="GO" id="GO:0042274">
    <property type="term" value="P:ribosomal small subunit biogenesis"/>
    <property type="evidence" value="ECO:0007669"/>
    <property type="project" value="TreeGrafter"/>
</dbReference>
<dbReference type="GO" id="GO:0006412">
    <property type="term" value="P:translation"/>
    <property type="evidence" value="ECO:0007669"/>
    <property type="project" value="UniProtKB-UniRule"/>
</dbReference>
<dbReference type="CDD" id="cd00165">
    <property type="entry name" value="S4"/>
    <property type="match status" value="1"/>
</dbReference>
<dbReference type="FunFam" id="1.10.1050.10:FF:000001">
    <property type="entry name" value="30S ribosomal protein S4"/>
    <property type="match status" value="1"/>
</dbReference>
<dbReference type="FunFam" id="3.10.290.10:FF:000001">
    <property type="entry name" value="30S ribosomal protein S4"/>
    <property type="match status" value="1"/>
</dbReference>
<dbReference type="Gene3D" id="1.10.1050.10">
    <property type="entry name" value="Ribosomal Protein S4 Delta 41, Chain A, domain 1"/>
    <property type="match status" value="1"/>
</dbReference>
<dbReference type="Gene3D" id="3.10.290.10">
    <property type="entry name" value="RNA-binding S4 domain"/>
    <property type="match status" value="1"/>
</dbReference>
<dbReference type="HAMAP" id="MF_01306_B">
    <property type="entry name" value="Ribosomal_uS4_B"/>
    <property type="match status" value="1"/>
</dbReference>
<dbReference type="InterPro" id="IPR022801">
    <property type="entry name" value="Ribosomal_uS4"/>
</dbReference>
<dbReference type="InterPro" id="IPR005709">
    <property type="entry name" value="Ribosomal_uS4_bac-type"/>
</dbReference>
<dbReference type="InterPro" id="IPR018079">
    <property type="entry name" value="Ribosomal_uS4_CS"/>
</dbReference>
<dbReference type="InterPro" id="IPR001912">
    <property type="entry name" value="Ribosomal_uS4_N"/>
</dbReference>
<dbReference type="InterPro" id="IPR002942">
    <property type="entry name" value="S4_RNA-bd"/>
</dbReference>
<dbReference type="InterPro" id="IPR036986">
    <property type="entry name" value="S4_RNA-bd_sf"/>
</dbReference>
<dbReference type="NCBIfam" id="NF003717">
    <property type="entry name" value="PRK05327.1"/>
    <property type="match status" value="1"/>
</dbReference>
<dbReference type="NCBIfam" id="TIGR01017">
    <property type="entry name" value="rpsD_bact"/>
    <property type="match status" value="1"/>
</dbReference>
<dbReference type="PANTHER" id="PTHR11831">
    <property type="entry name" value="30S 40S RIBOSOMAL PROTEIN"/>
    <property type="match status" value="1"/>
</dbReference>
<dbReference type="PANTHER" id="PTHR11831:SF4">
    <property type="entry name" value="SMALL RIBOSOMAL SUBUNIT PROTEIN US4M"/>
    <property type="match status" value="1"/>
</dbReference>
<dbReference type="Pfam" id="PF00163">
    <property type="entry name" value="Ribosomal_S4"/>
    <property type="match status" value="1"/>
</dbReference>
<dbReference type="Pfam" id="PF01479">
    <property type="entry name" value="S4"/>
    <property type="match status" value="1"/>
</dbReference>
<dbReference type="SMART" id="SM01390">
    <property type="entry name" value="Ribosomal_S4"/>
    <property type="match status" value="1"/>
</dbReference>
<dbReference type="SMART" id="SM00363">
    <property type="entry name" value="S4"/>
    <property type="match status" value="1"/>
</dbReference>
<dbReference type="SUPFAM" id="SSF55174">
    <property type="entry name" value="Alpha-L RNA-binding motif"/>
    <property type="match status" value="1"/>
</dbReference>
<dbReference type="PROSITE" id="PS00632">
    <property type="entry name" value="RIBOSOMAL_S4"/>
    <property type="match status" value="1"/>
</dbReference>
<dbReference type="PROSITE" id="PS50889">
    <property type="entry name" value="S4"/>
    <property type="match status" value="1"/>
</dbReference>
<proteinExistence type="inferred from homology"/>
<accession>Q664U5</accession>
<comment type="function">
    <text evidence="1">One of the primary rRNA binding proteins, it binds directly to 16S rRNA where it nucleates assembly of the body of the 30S subunit.</text>
</comment>
<comment type="function">
    <text evidence="1">With S5 and S12 plays an important role in translational accuracy.</text>
</comment>
<comment type="subunit">
    <text evidence="1">Part of the 30S ribosomal subunit. Contacts protein S5. The interaction surface between S4 and S5 is involved in control of translational fidelity.</text>
</comment>
<comment type="similarity">
    <text evidence="1">Belongs to the universal ribosomal protein uS4 family.</text>
</comment>
<evidence type="ECO:0000255" key="1">
    <source>
        <dbReference type="HAMAP-Rule" id="MF_01306"/>
    </source>
</evidence>
<evidence type="ECO:0000305" key="2"/>
<organism>
    <name type="scientific">Yersinia pseudotuberculosis serotype I (strain IP32953)</name>
    <dbReference type="NCBI Taxonomy" id="273123"/>
    <lineage>
        <taxon>Bacteria</taxon>
        <taxon>Pseudomonadati</taxon>
        <taxon>Pseudomonadota</taxon>
        <taxon>Gammaproteobacteria</taxon>
        <taxon>Enterobacterales</taxon>
        <taxon>Yersiniaceae</taxon>
        <taxon>Yersinia</taxon>
    </lineage>
</organism>